<organism>
    <name type="scientific">Shigella dysenteriae serotype 1 (strain Sd197)</name>
    <dbReference type="NCBI Taxonomy" id="300267"/>
    <lineage>
        <taxon>Bacteria</taxon>
        <taxon>Pseudomonadati</taxon>
        <taxon>Pseudomonadota</taxon>
        <taxon>Gammaproteobacteria</taxon>
        <taxon>Enterobacterales</taxon>
        <taxon>Enterobacteriaceae</taxon>
        <taxon>Shigella</taxon>
    </lineage>
</organism>
<evidence type="ECO:0000255" key="1">
    <source>
        <dbReference type="HAMAP-Rule" id="MF_01712"/>
    </source>
</evidence>
<name>NIKE_SHIDS</name>
<proteinExistence type="inferred from homology"/>
<comment type="function">
    <text evidence="1">Part of the ABC transporter complex NikABCDE involved in nickel import. Responsible for energy coupling to the transport system.</text>
</comment>
<comment type="catalytic activity">
    <reaction evidence="1">
        <text>Ni(2+)(out) + ATP + H2O = Ni(2+)(in) + ADP + phosphate + H(+)</text>
        <dbReference type="Rhea" id="RHEA:15557"/>
        <dbReference type="ChEBI" id="CHEBI:15377"/>
        <dbReference type="ChEBI" id="CHEBI:15378"/>
        <dbReference type="ChEBI" id="CHEBI:30616"/>
        <dbReference type="ChEBI" id="CHEBI:43474"/>
        <dbReference type="ChEBI" id="CHEBI:49786"/>
        <dbReference type="ChEBI" id="CHEBI:456216"/>
        <dbReference type="EC" id="7.2.2.11"/>
    </reaction>
</comment>
<comment type="subunit">
    <text evidence="1">The complex is composed of two ATP-binding proteins (NikD and NikE), two transmembrane proteins (NikB and NikC) and a solute-binding protein (NikA).</text>
</comment>
<comment type="subcellular location">
    <subcellularLocation>
        <location evidence="1">Cell inner membrane</location>
        <topology evidence="1">Peripheral membrane protein</topology>
    </subcellularLocation>
</comment>
<comment type="similarity">
    <text evidence="1">Belongs to the ABC transporter superfamily. Nickel importer (TC 3.A.1.5.3) family.</text>
</comment>
<sequence length="268" mass="29713">MTLLNVSDLSHHYAHGGFSGKHQHQAVLNNVSLTLKSGETVALLGRSGCGKSTLARLLIGLESPSQGNISWRGEPLAKLNRAQRKAFRRDIQMVFQDSISAVNPRKTVREILREPMRHLLSLKKSEQLARASEMLKAVDLDDSVLDKRPPQLSGGQLQRVCLARALAVEPKLLILDEAVSNLDLVLQAGVIRLLKKLQQQFGTACLFITHDLRLVERFCQRVMVMDNGQIVETQAVGDKLTFSSDAGRVLQNAVLPAFPVRRRTSEKV</sequence>
<feature type="chain" id="PRO_0000274124" description="Nickel import ATP-binding protein NikE">
    <location>
        <begin position="1"/>
        <end position="268"/>
    </location>
</feature>
<feature type="domain" description="ABC transporter" evidence="1">
    <location>
        <begin position="4"/>
        <end position="252"/>
    </location>
</feature>
<feature type="binding site" evidence="1">
    <location>
        <begin position="45"/>
        <end position="52"/>
    </location>
    <ligand>
        <name>ATP</name>
        <dbReference type="ChEBI" id="CHEBI:30616"/>
    </ligand>
</feature>
<dbReference type="EC" id="7.2.2.11" evidence="1"/>
<dbReference type="EMBL" id="CP000034">
    <property type="protein sequence ID" value="ABB63604.1"/>
    <property type="molecule type" value="Genomic_DNA"/>
</dbReference>
<dbReference type="RefSeq" id="WP_000173685.1">
    <property type="nucleotide sequence ID" value="NC_007606.1"/>
</dbReference>
<dbReference type="RefSeq" id="YP_405095.1">
    <property type="nucleotide sequence ID" value="NC_007606.1"/>
</dbReference>
<dbReference type="SMR" id="Q32AQ1"/>
<dbReference type="STRING" id="300267.SDY_3635"/>
<dbReference type="EnsemblBacteria" id="ABB63604">
    <property type="protein sequence ID" value="ABB63604"/>
    <property type="gene ID" value="SDY_3635"/>
</dbReference>
<dbReference type="KEGG" id="sdy:SDY_3635"/>
<dbReference type="PATRIC" id="fig|300267.13.peg.4314"/>
<dbReference type="HOGENOM" id="CLU_000604_1_23_6"/>
<dbReference type="Proteomes" id="UP000002716">
    <property type="component" value="Chromosome"/>
</dbReference>
<dbReference type="GO" id="GO:0005886">
    <property type="term" value="C:plasma membrane"/>
    <property type="evidence" value="ECO:0007669"/>
    <property type="project" value="UniProtKB-SubCell"/>
</dbReference>
<dbReference type="GO" id="GO:0015413">
    <property type="term" value="F:ABC-type nickel transporter activity"/>
    <property type="evidence" value="ECO:0007669"/>
    <property type="project" value="UniProtKB-EC"/>
</dbReference>
<dbReference type="GO" id="GO:0005524">
    <property type="term" value="F:ATP binding"/>
    <property type="evidence" value="ECO:0007669"/>
    <property type="project" value="UniProtKB-KW"/>
</dbReference>
<dbReference type="GO" id="GO:0016887">
    <property type="term" value="F:ATP hydrolysis activity"/>
    <property type="evidence" value="ECO:0007669"/>
    <property type="project" value="InterPro"/>
</dbReference>
<dbReference type="GO" id="GO:0016151">
    <property type="term" value="F:nickel cation binding"/>
    <property type="evidence" value="ECO:0007669"/>
    <property type="project" value="InterPro"/>
</dbReference>
<dbReference type="CDD" id="cd03257">
    <property type="entry name" value="ABC_NikE_OppD_transporters"/>
    <property type="match status" value="1"/>
</dbReference>
<dbReference type="FunFam" id="3.40.50.300:FF:001020">
    <property type="entry name" value="Nickel import ATP-binding protein NikE"/>
    <property type="match status" value="1"/>
</dbReference>
<dbReference type="Gene3D" id="3.40.50.300">
    <property type="entry name" value="P-loop containing nucleotide triphosphate hydrolases"/>
    <property type="match status" value="1"/>
</dbReference>
<dbReference type="InterPro" id="IPR003593">
    <property type="entry name" value="AAA+_ATPase"/>
</dbReference>
<dbReference type="InterPro" id="IPR050319">
    <property type="entry name" value="ABC_transp_ATP-bind"/>
</dbReference>
<dbReference type="InterPro" id="IPR003439">
    <property type="entry name" value="ABC_transporter-like_ATP-bd"/>
</dbReference>
<dbReference type="InterPro" id="IPR017871">
    <property type="entry name" value="ABC_transporter-like_CS"/>
</dbReference>
<dbReference type="InterPro" id="IPR014137">
    <property type="entry name" value="Nickel_NikE"/>
</dbReference>
<dbReference type="InterPro" id="IPR027417">
    <property type="entry name" value="P-loop_NTPase"/>
</dbReference>
<dbReference type="NCBIfam" id="TIGR02769">
    <property type="entry name" value="nickel_nikE"/>
    <property type="match status" value="1"/>
</dbReference>
<dbReference type="NCBIfam" id="NF007739">
    <property type="entry name" value="PRK10419.1"/>
    <property type="match status" value="1"/>
</dbReference>
<dbReference type="PANTHER" id="PTHR43776:SF7">
    <property type="entry name" value="D,D-DIPEPTIDE TRANSPORT ATP-BINDING PROTEIN DDPF-RELATED"/>
    <property type="match status" value="1"/>
</dbReference>
<dbReference type="PANTHER" id="PTHR43776">
    <property type="entry name" value="TRANSPORT ATP-BINDING PROTEIN"/>
    <property type="match status" value="1"/>
</dbReference>
<dbReference type="Pfam" id="PF00005">
    <property type="entry name" value="ABC_tran"/>
    <property type="match status" value="1"/>
</dbReference>
<dbReference type="SMART" id="SM00382">
    <property type="entry name" value="AAA"/>
    <property type="match status" value="1"/>
</dbReference>
<dbReference type="SUPFAM" id="SSF52540">
    <property type="entry name" value="P-loop containing nucleoside triphosphate hydrolases"/>
    <property type="match status" value="1"/>
</dbReference>
<dbReference type="PROSITE" id="PS00211">
    <property type="entry name" value="ABC_TRANSPORTER_1"/>
    <property type="match status" value="1"/>
</dbReference>
<dbReference type="PROSITE" id="PS50893">
    <property type="entry name" value="ABC_TRANSPORTER_2"/>
    <property type="match status" value="1"/>
</dbReference>
<dbReference type="PROSITE" id="PS51248">
    <property type="entry name" value="NIKE"/>
    <property type="match status" value="1"/>
</dbReference>
<gene>
    <name evidence="1" type="primary">nikE</name>
    <name type="ordered locus">SDY_3635</name>
</gene>
<reference key="1">
    <citation type="journal article" date="2005" name="Nucleic Acids Res.">
        <title>Genome dynamics and diversity of Shigella species, the etiologic agents of bacillary dysentery.</title>
        <authorList>
            <person name="Yang F."/>
            <person name="Yang J."/>
            <person name="Zhang X."/>
            <person name="Chen L."/>
            <person name="Jiang Y."/>
            <person name="Yan Y."/>
            <person name="Tang X."/>
            <person name="Wang J."/>
            <person name="Xiong Z."/>
            <person name="Dong J."/>
            <person name="Xue Y."/>
            <person name="Zhu Y."/>
            <person name="Xu X."/>
            <person name="Sun L."/>
            <person name="Chen S."/>
            <person name="Nie H."/>
            <person name="Peng J."/>
            <person name="Xu J."/>
            <person name="Wang Y."/>
            <person name="Yuan Z."/>
            <person name="Wen Y."/>
            <person name="Yao Z."/>
            <person name="Shen Y."/>
            <person name="Qiang B."/>
            <person name="Hou Y."/>
            <person name="Yu J."/>
            <person name="Jin Q."/>
        </authorList>
    </citation>
    <scope>NUCLEOTIDE SEQUENCE [LARGE SCALE GENOMIC DNA]</scope>
    <source>
        <strain>Sd197</strain>
    </source>
</reference>
<protein>
    <recommendedName>
        <fullName evidence="1">Nickel import ATP-binding protein NikE</fullName>
        <ecNumber evidence="1">7.2.2.11</ecNumber>
    </recommendedName>
</protein>
<accession>Q32AQ1</accession>
<keyword id="KW-0067">ATP-binding</keyword>
<keyword id="KW-0997">Cell inner membrane</keyword>
<keyword id="KW-1003">Cell membrane</keyword>
<keyword id="KW-0406">Ion transport</keyword>
<keyword id="KW-0472">Membrane</keyword>
<keyword id="KW-0533">Nickel</keyword>
<keyword id="KW-0921">Nickel transport</keyword>
<keyword id="KW-0547">Nucleotide-binding</keyword>
<keyword id="KW-1185">Reference proteome</keyword>
<keyword id="KW-1278">Translocase</keyword>
<keyword id="KW-0813">Transport</keyword>